<sequence length="406" mass="45525">MKVTNASLLALLLPAVSGRFVETGEPDRSILYPDGLPQPTETGEKYHIELSPGDTRWVTEDEKWELRRSGKRFFDITDHPDLGALRAMTASRKKSVFPEKPKYQKELKPFLAELSKTEMEDHLTTFTSFHTRYYKSDYGRQSSEWLLKQVRDTIEKAGADKHVRAEHFKHPWGQNSIIATIPGKTNATVVIGAHQDSINLWLPSVLAAPGADDDGSGTVTILEAFRVILQSEDIVKGNHENTLEFHWYSAEEGGLLGSQAIFSSYEKEGRDVKAMLQQDMTGFITRTLDAGKPESVGVIVDFVDPNLTQFIKVVIDEYCSIPYVETKCGYACSDHASASKAGYPSAFVIESAFEYSDNHIHSTEDLIKYLSFDHMLQHARMTLAFGYELAFTDFAALEKPDHSDSL</sequence>
<reference key="1">
    <citation type="journal article" date="2015" name="Genome Announc.">
        <title>Draft genome sequence of the cellulolytic fungus Chaetomium globosum.</title>
        <authorList>
            <person name="Cuomo C.A."/>
            <person name="Untereiner W.A."/>
            <person name="Ma L.-J."/>
            <person name="Grabherr M."/>
            <person name="Birren B.W."/>
        </authorList>
    </citation>
    <scope>NUCLEOTIDE SEQUENCE [LARGE SCALE GENOMIC DNA]</scope>
    <source>
        <strain>ATCC 6205 / CBS 148.51 / DSM 1962 / NBRC 6347 / NRRL 1970</strain>
    </source>
</reference>
<evidence type="ECO:0000250" key="1"/>
<evidence type="ECO:0000255" key="2"/>
<evidence type="ECO:0000305" key="3"/>
<protein>
    <recommendedName>
        <fullName>Leucine aminopeptidase 1</fullName>
        <ecNumber>3.4.11.-</ecNumber>
    </recommendedName>
    <alternativeName>
        <fullName>Leucyl aminopeptidase 1</fullName>
        <shortName>LAP1</shortName>
    </alternativeName>
</protein>
<feature type="signal peptide" evidence="2">
    <location>
        <begin position="1"/>
        <end position="18"/>
    </location>
</feature>
<feature type="propeptide" id="PRO_0000412399" evidence="1">
    <location>
        <begin position="19"/>
        <end position="94"/>
    </location>
</feature>
<feature type="chain" id="PRO_0000412400" description="Leucine aminopeptidase 1">
    <location>
        <begin position="95"/>
        <end position="406"/>
    </location>
</feature>
<feature type="binding site" evidence="1">
    <location>
        <position position="194"/>
    </location>
    <ligand>
        <name>Zn(2+)</name>
        <dbReference type="ChEBI" id="CHEBI:29105"/>
        <label>1</label>
    </ligand>
</feature>
<feature type="binding site" evidence="1">
    <location>
        <position position="213"/>
    </location>
    <ligand>
        <name>Zn(2+)</name>
        <dbReference type="ChEBI" id="CHEBI:29105"/>
        <label>1</label>
    </ligand>
</feature>
<feature type="binding site" evidence="1">
    <location>
        <position position="213"/>
    </location>
    <ligand>
        <name>Zn(2+)</name>
        <dbReference type="ChEBI" id="CHEBI:29105"/>
        <label>2</label>
        <note>catalytic</note>
    </ligand>
</feature>
<feature type="binding site" evidence="1">
    <location>
        <position position="252"/>
    </location>
    <ligand>
        <name>Zn(2+)</name>
        <dbReference type="ChEBI" id="CHEBI:29105"/>
        <label>2</label>
        <note>catalytic</note>
    </ligand>
</feature>
<feature type="binding site" evidence="1">
    <location>
        <position position="279"/>
    </location>
    <ligand>
        <name>Zn(2+)</name>
        <dbReference type="ChEBI" id="CHEBI:29105"/>
        <label>1</label>
    </ligand>
</feature>
<feature type="binding site" evidence="1">
    <location>
        <position position="361"/>
    </location>
    <ligand>
        <name>Zn(2+)</name>
        <dbReference type="ChEBI" id="CHEBI:29105"/>
        <label>2</label>
        <note>catalytic</note>
    </ligand>
</feature>
<feature type="glycosylation site" description="N-linked (GlcNAc...) asparagine" evidence="2">
    <location>
        <position position="186"/>
    </location>
</feature>
<feature type="glycosylation site" description="N-linked (GlcNAc...) asparagine" evidence="2">
    <location>
        <position position="306"/>
    </location>
</feature>
<feature type="disulfide bond" evidence="1">
    <location>
        <begin position="328"/>
        <end position="332"/>
    </location>
</feature>
<dbReference type="EC" id="3.4.11.-"/>
<dbReference type="EMBL" id="CH408032">
    <property type="protein sequence ID" value="EAQ87639.1"/>
    <property type="molecule type" value="Genomic_DNA"/>
</dbReference>
<dbReference type="RefSeq" id="XP_001223472.1">
    <property type="nucleotide sequence ID" value="XM_001223471.1"/>
</dbReference>
<dbReference type="SMR" id="Q2H1T8"/>
<dbReference type="FunCoup" id="Q2H1T8">
    <property type="interactions" value="20"/>
</dbReference>
<dbReference type="STRING" id="306901.Q2H1T8"/>
<dbReference type="MEROPS" id="M28.022"/>
<dbReference type="GlyCosmos" id="Q2H1T8">
    <property type="glycosylation" value="2 sites, No reported glycans"/>
</dbReference>
<dbReference type="GeneID" id="4391804"/>
<dbReference type="VEuPathDB" id="FungiDB:CHGG_04258"/>
<dbReference type="eggNOG" id="KOG2195">
    <property type="taxonomic scope" value="Eukaryota"/>
</dbReference>
<dbReference type="HOGENOM" id="CLU_025866_0_0_1"/>
<dbReference type="InParanoid" id="Q2H1T8"/>
<dbReference type="OMA" id="GMLQQDM"/>
<dbReference type="OrthoDB" id="2214at2759"/>
<dbReference type="Proteomes" id="UP000001056">
    <property type="component" value="Unassembled WGS sequence"/>
</dbReference>
<dbReference type="GO" id="GO:0005576">
    <property type="term" value="C:extracellular region"/>
    <property type="evidence" value="ECO:0007669"/>
    <property type="project" value="UniProtKB-SubCell"/>
</dbReference>
<dbReference type="GO" id="GO:0004177">
    <property type="term" value="F:aminopeptidase activity"/>
    <property type="evidence" value="ECO:0007669"/>
    <property type="project" value="UniProtKB-KW"/>
</dbReference>
<dbReference type="GO" id="GO:0046872">
    <property type="term" value="F:metal ion binding"/>
    <property type="evidence" value="ECO:0007669"/>
    <property type="project" value="UniProtKB-KW"/>
</dbReference>
<dbReference type="GO" id="GO:0008235">
    <property type="term" value="F:metalloexopeptidase activity"/>
    <property type="evidence" value="ECO:0007669"/>
    <property type="project" value="InterPro"/>
</dbReference>
<dbReference type="GO" id="GO:0006508">
    <property type="term" value="P:proteolysis"/>
    <property type="evidence" value="ECO:0007669"/>
    <property type="project" value="UniProtKB-KW"/>
</dbReference>
<dbReference type="CDD" id="cd03879">
    <property type="entry name" value="M28_AAP"/>
    <property type="match status" value="1"/>
</dbReference>
<dbReference type="FunFam" id="3.40.630.10:FF:000042">
    <property type="entry name" value="Peptide hydrolase"/>
    <property type="match status" value="1"/>
</dbReference>
<dbReference type="Gene3D" id="3.40.630.10">
    <property type="entry name" value="Zn peptidases"/>
    <property type="match status" value="1"/>
</dbReference>
<dbReference type="InterPro" id="IPR045175">
    <property type="entry name" value="M28_fam"/>
</dbReference>
<dbReference type="InterPro" id="IPR007484">
    <property type="entry name" value="Peptidase_M28"/>
</dbReference>
<dbReference type="PANTHER" id="PTHR12147:SF56">
    <property type="entry name" value="AMINOPEPTIDASE YDR415C-RELATED"/>
    <property type="match status" value="1"/>
</dbReference>
<dbReference type="PANTHER" id="PTHR12147">
    <property type="entry name" value="METALLOPEPTIDASE M28 FAMILY MEMBER"/>
    <property type="match status" value="1"/>
</dbReference>
<dbReference type="Pfam" id="PF04389">
    <property type="entry name" value="Peptidase_M28"/>
    <property type="match status" value="1"/>
</dbReference>
<dbReference type="SUPFAM" id="SSF53187">
    <property type="entry name" value="Zn-dependent exopeptidases"/>
    <property type="match status" value="1"/>
</dbReference>
<organism>
    <name type="scientific">Chaetomium globosum (strain ATCC 6205 / CBS 148.51 / DSM 1962 / NBRC 6347 / NRRL 1970)</name>
    <name type="common">Soil fungus</name>
    <dbReference type="NCBI Taxonomy" id="306901"/>
    <lineage>
        <taxon>Eukaryota</taxon>
        <taxon>Fungi</taxon>
        <taxon>Dikarya</taxon>
        <taxon>Ascomycota</taxon>
        <taxon>Pezizomycotina</taxon>
        <taxon>Sordariomycetes</taxon>
        <taxon>Sordariomycetidae</taxon>
        <taxon>Sordariales</taxon>
        <taxon>Chaetomiaceae</taxon>
        <taxon>Chaetomium</taxon>
    </lineage>
</organism>
<comment type="function">
    <text evidence="1">Extracellular aminopeptidase that allows assimilation of proteinaceous substrates.</text>
</comment>
<comment type="cofactor">
    <cofactor evidence="1">
        <name>Zn(2+)</name>
        <dbReference type="ChEBI" id="CHEBI:29105"/>
    </cofactor>
    <text evidence="1">Binds 2 Zn(2+) ions per subunit.</text>
</comment>
<comment type="subunit">
    <text evidence="1">Monomer.</text>
</comment>
<comment type="subcellular location">
    <subcellularLocation>
        <location evidence="1">Secreted</location>
    </subcellularLocation>
</comment>
<comment type="similarity">
    <text evidence="3">Belongs to the peptidase M28 family. M28E subfamily.</text>
</comment>
<proteinExistence type="inferred from homology"/>
<keyword id="KW-0031">Aminopeptidase</keyword>
<keyword id="KW-1015">Disulfide bond</keyword>
<keyword id="KW-0325">Glycoprotein</keyword>
<keyword id="KW-0378">Hydrolase</keyword>
<keyword id="KW-0479">Metal-binding</keyword>
<keyword id="KW-0645">Protease</keyword>
<keyword id="KW-1185">Reference proteome</keyword>
<keyword id="KW-0964">Secreted</keyword>
<keyword id="KW-0732">Signal</keyword>
<keyword id="KW-0862">Zinc</keyword>
<keyword id="KW-0865">Zymogen</keyword>
<name>LAP1_CHAGB</name>
<gene>
    <name type="primary">LAP1</name>
    <name type="ORF">CHGG_04258</name>
</gene>
<accession>Q2H1T8</accession>